<accession>P62177</accession>
<accession>P26763</accession>
<accession>Q6HUI2</accession>
<accession>Q6KNR8</accession>
<name>RP35_BACAN</name>
<protein>
    <recommendedName>
        <fullName>RNA polymerase sigma-35 factor</fullName>
    </recommendedName>
</protein>
<organism>
    <name type="scientific">Bacillus anthracis</name>
    <dbReference type="NCBI Taxonomy" id="1392"/>
    <lineage>
        <taxon>Bacteria</taxon>
        <taxon>Bacillati</taxon>
        <taxon>Bacillota</taxon>
        <taxon>Bacilli</taxon>
        <taxon>Bacillales</taxon>
        <taxon>Bacillaceae</taxon>
        <taxon>Bacillus</taxon>
        <taxon>Bacillus cereus group</taxon>
    </lineage>
</organism>
<dbReference type="EMBL" id="AE016879">
    <property type="protein sequence ID" value="AAP27769.1"/>
    <property type="molecule type" value="Genomic_DNA"/>
</dbReference>
<dbReference type="EMBL" id="AE017334">
    <property type="protein sequence ID" value="AAT33160.1"/>
    <property type="molecule type" value="Genomic_DNA"/>
</dbReference>
<dbReference type="EMBL" id="AE017225">
    <property type="protein sequence ID" value="AAT56057.1"/>
    <property type="molecule type" value="Genomic_DNA"/>
</dbReference>
<dbReference type="RefSeq" id="NP_846283.1">
    <property type="nucleotide sequence ID" value="NC_003997.3"/>
</dbReference>
<dbReference type="RefSeq" id="WP_000976948.1">
    <property type="nucleotide sequence ID" value="NZ_WXXJ01000026.1"/>
</dbReference>
<dbReference type="RefSeq" id="YP_030006.1">
    <property type="nucleotide sequence ID" value="NC_005945.1"/>
</dbReference>
<dbReference type="SMR" id="P62177"/>
<dbReference type="STRING" id="261594.GBAA_4043"/>
<dbReference type="DNASU" id="1086623"/>
<dbReference type="GeneID" id="93007207"/>
<dbReference type="KEGG" id="ban:BA_4043"/>
<dbReference type="KEGG" id="bar:GBAA_4043"/>
<dbReference type="KEGG" id="bat:BAS3755"/>
<dbReference type="PATRIC" id="fig|198094.11.peg.4014"/>
<dbReference type="eggNOG" id="COG1191">
    <property type="taxonomic scope" value="Bacteria"/>
</dbReference>
<dbReference type="HOGENOM" id="CLU_014793_8_7_9"/>
<dbReference type="OMA" id="EPLNTDW"/>
<dbReference type="OrthoDB" id="9809557at2"/>
<dbReference type="Proteomes" id="UP000000427">
    <property type="component" value="Chromosome"/>
</dbReference>
<dbReference type="Proteomes" id="UP000000594">
    <property type="component" value="Chromosome"/>
</dbReference>
<dbReference type="GO" id="GO:0003677">
    <property type="term" value="F:DNA binding"/>
    <property type="evidence" value="ECO:0007669"/>
    <property type="project" value="UniProtKB-KW"/>
</dbReference>
<dbReference type="GO" id="GO:0016987">
    <property type="term" value="F:sigma factor activity"/>
    <property type="evidence" value="ECO:0007669"/>
    <property type="project" value="UniProtKB-KW"/>
</dbReference>
<dbReference type="GO" id="GO:0006352">
    <property type="term" value="P:DNA-templated transcription initiation"/>
    <property type="evidence" value="ECO:0007669"/>
    <property type="project" value="InterPro"/>
</dbReference>
<dbReference type="GO" id="GO:0030435">
    <property type="term" value="P:sporulation resulting in formation of a cellular spore"/>
    <property type="evidence" value="ECO:0007669"/>
    <property type="project" value="UniProtKB-KW"/>
</dbReference>
<dbReference type="CDD" id="cd06171">
    <property type="entry name" value="Sigma70_r4"/>
    <property type="match status" value="1"/>
</dbReference>
<dbReference type="FunFam" id="1.10.10.10:FF:000202">
    <property type="entry name" value="RNA polymerase sigma factor"/>
    <property type="match status" value="1"/>
</dbReference>
<dbReference type="FunFam" id="1.20.120.1810:FF:000003">
    <property type="entry name" value="RNA polymerase sigma factor"/>
    <property type="match status" value="1"/>
</dbReference>
<dbReference type="Gene3D" id="1.20.120.1810">
    <property type="match status" value="1"/>
</dbReference>
<dbReference type="Gene3D" id="1.10.10.10">
    <property type="entry name" value="Winged helix-like DNA-binding domain superfamily/Winged helix DNA-binding domain"/>
    <property type="match status" value="1"/>
</dbReference>
<dbReference type="InterPro" id="IPR001387">
    <property type="entry name" value="Cro/C1-type_HTH"/>
</dbReference>
<dbReference type="InterPro" id="IPR014284">
    <property type="entry name" value="RNA_pol_sigma-70_dom"/>
</dbReference>
<dbReference type="InterPro" id="IPR014200">
    <property type="entry name" value="RNA_pol_sigma-E"/>
</dbReference>
<dbReference type="InterPro" id="IPR000943">
    <property type="entry name" value="RNA_pol_sigma70"/>
</dbReference>
<dbReference type="InterPro" id="IPR007627">
    <property type="entry name" value="RNA_pol_sigma70_r2"/>
</dbReference>
<dbReference type="InterPro" id="IPR007630">
    <property type="entry name" value="RNA_pol_sigma70_r4"/>
</dbReference>
<dbReference type="InterPro" id="IPR013325">
    <property type="entry name" value="RNA_pol_sigma_r2"/>
</dbReference>
<dbReference type="InterPro" id="IPR013324">
    <property type="entry name" value="RNA_pol_sigma_r3/r4-like"/>
</dbReference>
<dbReference type="InterPro" id="IPR050813">
    <property type="entry name" value="Sigma-70_Factor"/>
</dbReference>
<dbReference type="InterPro" id="IPR036388">
    <property type="entry name" value="WH-like_DNA-bd_sf"/>
</dbReference>
<dbReference type="NCBIfam" id="NF004471">
    <property type="entry name" value="PRK05803.1"/>
    <property type="match status" value="1"/>
</dbReference>
<dbReference type="NCBIfam" id="NF006158">
    <property type="entry name" value="PRK08301.1"/>
    <property type="match status" value="1"/>
</dbReference>
<dbReference type="NCBIfam" id="TIGR02937">
    <property type="entry name" value="sigma70-ECF"/>
    <property type="match status" value="1"/>
</dbReference>
<dbReference type="NCBIfam" id="TIGR02835">
    <property type="entry name" value="spore_sigmaE"/>
    <property type="match status" value="1"/>
</dbReference>
<dbReference type="PANTHER" id="PTHR30376:SF3">
    <property type="entry name" value="RNA POLYMERASE SIGMA FACTOR RPOH"/>
    <property type="match status" value="1"/>
</dbReference>
<dbReference type="PANTHER" id="PTHR30376">
    <property type="entry name" value="SIGMA FACTOR RPOH HEAT SHOCK RELATED"/>
    <property type="match status" value="1"/>
</dbReference>
<dbReference type="Pfam" id="PF04542">
    <property type="entry name" value="Sigma70_r2"/>
    <property type="match status" value="1"/>
</dbReference>
<dbReference type="Pfam" id="PF04545">
    <property type="entry name" value="Sigma70_r4"/>
    <property type="match status" value="1"/>
</dbReference>
<dbReference type="PIRSF" id="PIRSF000770">
    <property type="entry name" value="RNA_pol_sigma-SigE/K"/>
    <property type="match status" value="1"/>
</dbReference>
<dbReference type="PRINTS" id="PR00046">
    <property type="entry name" value="SIGMA70FCT"/>
</dbReference>
<dbReference type="SUPFAM" id="SSF88946">
    <property type="entry name" value="Sigma2 domain of RNA polymerase sigma factors"/>
    <property type="match status" value="1"/>
</dbReference>
<dbReference type="SUPFAM" id="SSF88659">
    <property type="entry name" value="Sigma3 and sigma4 domains of RNA polymerase sigma factors"/>
    <property type="match status" value="1"/>
</dbReference>
<dbReference type="PROSITE" id="PS00715">
    <property type="entry name" value="SIGMA70_1"/>
    <property type="match status" value="1"/>
</dbReference>
<dbReference type="PROSITE" id="PS00716">
    <property type="entry name" value="SIGMA70_2"/>
    <property type="match status" value="1"/>
</dbReference>
<comment type="function">
    <text evidence="1">Sigma factors are initiation factors that promote the attachment of RNA polymerase to specific initiation sites and are then released. This sigma factor directs the transcription of crystal protein genes, a sporulation-regulated event (By similarity).</text>
</comment>
<comment type="PTM">
    <text evidence="1">Proteolytically cleaved in the N-terminus probably by a SpoIIGA homolog to yield the active peptide.</text>
</comment>
<comment type="similarity">
    <text evidence="2">Belongs to the sigma-70 factor family.</text>
</comment>
<keyword id="KW-0238">DNA-binding</keyword>
<keyword id="KW-1185">Reference proteome</keyword>
<keyword id="KW-0731">Sigma factor</keyword>
<keyword id="KW-0749">Sporulation</keyword>
<keyword id="KW-0804">Transcription</keyword>
<keyword id="KW-0805">Transcription regulation</keyword>
<reference key="1">
    <citation type="journal article" date="2003" name="Nature">
        <title>The genome sequence of Bacillus anthracis Ames and comparison to closely related bacteria.</title>
        <authorList>
            <person name="Read T.D."/>
            <person name="Peterson S.N."/>
            <person name="Tourasse N.J."/>
            <person name="Baillie L.W."/>
            <person name="Paulsen I.T."/>
            <person name="Nelson K.E."/>
            <person name="Tettelin H."/>
            <person name="Fouts D.E."/>
            <person name="Eisen J.A."/>
            <person name="Gill S.R."/>
            <person name="Holtzapple E.K."/>
            <person name="Okstad O.A."/>
            <person name="Helgason E."/>
            <person name="Rilstone J."/>
            <person name="Wu M."/>
            <person name="Kolonay J.F."/>
            <person name="Beanan M.J."/>
            <person name="Dodson R.J."/>
            <person name="Brinkac L.M."/>
            <person name="Gwinn M.L."/>
            <person name="DeBoy R.T."/>
            <person name="Madpu R."/>
            <person name="Daugherty S.C."/>
            <person name="Durkin A.S."/>
            <person name="Haft D.H."/>
            <person name="Nelson W.C."/>
            <person name="Peterson J.D."/>
            <person name="Pop M."/>
            <person name="Khouri H.M."/>
            <person name="Radune D."/>
            <person name="Benton J.L."/>
            <person name="Mahamoud Y."/>
            <person name="Jiang L."/>
            <person name="Hance I.R."/>
            <person name="Weidman J.F."/>
            <person name="Berry K.J."/>
            <person name="Plaut R.D."/>
            <person name="Wolf A.M."/>
            <person name="Watkins K.L."/>
            <person name="Nierman W.C."/>
            <person name="Hazen A."/>
            <person name="Cline R.T."/>
            <person name="Redmond C."/>
            <person name="Thwaite J.E."/>
            <person name="White O."/>
            <person name="Salzberg S.L."/>
            <person name="Thomason B."/>
            <person name="Friedlander A.M."/>
            <person name="Koehler T.M."/>
            <person name="Hanna P.C."/>
            <person name="Kolstoe A.-B."/>
            <person name="Fraser C.M."/>
        </authorList>
    </citation>
    <scope>NUCLEOTIDE SEQUENCE [LARGE SCALE GENOMIC DNA]</scope>
    <source>
        <strain>Ames / isolate Porton</strain>
    </source>
</reference>
<reference key="2">
    <citation type="journal article" date="2009" name="J. Bacteriol.">
        <title>The complete genome sequence of Bacillus anthracis Ames 'Ancestor'.</title>
        <authorList>
            <person name="Ravel J."/>
            <person name="Jiang L."/>
            <person name="Stanley S.T."/>
            <person name="Wilson M.R."/>
            <person name="Decker R.S."/>
            <person name="Read T.D."/>
            <person name="Worsham P."/>
            <person name="Keim P.S."/>
            <person name="Salzberg S.L."/>
            <person name="Fraser-Liggett C.M."/>
            <person name="Rasko D.A."/>
        </authorList>
    </citation>
    <scope>NUCLEOTIDE SEQUENCE [LARGE SCALE GENOMIC DNA]</scope>
    <source>
        <strain>Ames ancestor</strain>
    </source>
</reference>
<reference key="3">
    <citation type="submission" date="2004-01" db="EMBL/GenBank/DDBJ databases">
        <title>Complete genome sequence of Bacillus anthracis Sterne.</title>
        <authorList>
            <person name="Brettin T.S."/>
            <person name="Bruce D."/>
            <person name="Challacombe J.F."/>
            <person name="Gilna P."/>
            <person name="Han C."/>
            <person name="Hill K."/>
            <person name="Hitchcock P."/>
            <person name="Jackson P."/>
            <person name="Keim P."/>
            <person name="Longmire J."/>
            <person name="Lucas S."/>
            <person name="Okinaka R."/>
            <person name="Richardson P."/>
            <person name="Rubin E."/>
            <person name="Tice H."/>
        </authorList>
    </citation>
    <scope>NUCLEOTIDE SEQUENCE [LARGE SCALE GENOMIC DNA]</scope>
    <source>
        <strain>Sterne</strain>
    </source>
</reference>
<sequence>MMKLKFYLVYLWYKVLLKLGIKTDEIYYIGGSEALPPPLTKEEEEVLLNKLPKGDQAARSLLIERNLRLVVYIARKFENTGINIEDLISIGTIGLIKAVNTFNPEKKIKLATYASRCIENEILMHLRRNNKNRSEVSFDEPLNIDWDGNELLLSDVLGTDDDIITKDLEATVDRHLLMKALHQLNDREKQIMELRFGLAGGEEKTQKDVADMLGISQSYISRLEKRIIKRLRKEFNKMV</sequence>
<feature type="propeptide" id="PRO_0000032582" evidence="1">
    <location>
        <begin position="1"/>
        <end position="27"/>
    </location>
</feature>
<feature type="chain" id="PRO_0000032583" description="RNA polymerase sigma-35 factor">
    <location>
        <begin position="28"/>
        <end position="239"/>
    </location>
</feature>
<feature type="DNA-binding region" description="H-T-H motif" evidence="1">
    <location>
        <begin position="206"/>
        <end position="225"/>
    </location>
</feature>
<feature type="short sequence motif" description="Polymerase core binding">
    <location>
        <begin position="86"/>
        <end position="99"/>
    </location>
</feature>
<evidence type="ECO:0000250" key="1"/>
<evidence type="ECO:0000305" key="2"/>
<gene>
    <name type="primary">sigE</name>
    <name type="ordered locus">BA_4043</name>
    <name type="ordered locus">GBAA_4043</name>
    <name type="ordered locus">BAS3755</name>
</gene>
<proteinExistence type="inferred from homology"/>